<organism>
    <name type="scientific">Danio rerio</name>
    <name type="common">Zebrafish</name>
    <name type="synonym">Brachydanio rerio</name>
    <dbReference type="NCBI Taxonomy" id="7955"/>
    <lineage>
        <taxon>Eukaryota</taxon>
        <taxon>Metazoa</taxon>
        <taxon>Chordata</taxon>
        <taxon>Craniata</taxon>
        <taxon>Vertebrata</taxon>
        <taxon>Euteleostomi</taxon>
        <taxon>Actinopterygii</taxon>
        <taxon>Neopterygii</taxon>
        <taxon>Teleostei</taxon>
        <taxon>Ostariophysi</taxon>
        <taxon>Cypriniformes</taxon>
        <taxon>Danionidae</taxon>
        <taxon>Danioninae</taxon>
        <taxon>Danio</taxon>
    </lineage>
</organism>
<reference key="1">
    <citation type="submission" date="2003-08" db="EMBL/GenBank/DDBJ databases">
        <authorList>
            <consortium name="NIH - Zebrafish Gene Collection (ZGC) project"/>
        </authorList>
    </citation>
    <scope>NUCLEOTIDE SEQUENCE [LARGE SCALE MRNA] (ISOFORM 2)</scope>
    <source>
        <strain>AB</strain>
    </source>
</reference>
<reference key="2">
    <citation type="submission" date="2007-01" db="EMBL/GenBank/DDBJ databases">
        <title>Genome Institute of Singapore, zebrafish transcriptome characterization.</title>
        <authorList>
            <person name="Mathavan S."/>
            <person name="Yao F."/>
            <person name="Wong E."/>
            <person name="Thoreau H."/>
            <person name="Nayudu M."/>
            <person name="Govindarajan K.R."/>
            <person name="Ruan Y."/>
            <person name="Wei C."/>
        </authorList>
    </citation>
    <scope>NUCLEOTIDE SEQUENCE [LARGE SCALE MRNA] OF 1-263 (ISOFORM 1)</scope>
    <source>
        <strain>Tuebingen</strain>
        <tissue>Embryo</tissue>
    </source>
</reference>
<dbReference type="EMBL" id="BC056780">
    <property type="protein sequence ID" value="AAH56780.1"/>
    <property type="molecule type" value="mRNA"/>
</dbReference>
<dbReference type="EMBL" id="EH580184">
    <property type="status" value="NOT_ANNOTATED_CDS"/>
    <property type="molecule type" value="mRNA"/>
</dbReference>
<dbReference type="RefSeq" id="NP_956896.1">
    <molecule id="Q6PGZ0-2"/>
    <property type="nucleotide sequence ID" value="NM_200602.1"/>
</dbReference>
<dbReference type="SMR" id="Q6PGZ0"/>
<dbReference type="FunCoup" id="Q6PGZ0">
    <property type="interactions" value="212"/>
</dbReference>
<dbReference type="STRING" id="7955.ENSDARP00000073875"/>
<dbReference type="PaxDb" id="7955-ENSDARP00000109882"/>
<dbReference type="GeneID" id="393574"/>
<dbReference type="KEGG" id="dre:393574"/>
<dbReference type="AGR" id="ZFIN:ZDB-GENE-040426-1154"/>
<dbReference type="CTD" id="80254"/>
<dbReference type="ZFIN" id="ZDB-GENE-040426-1154">
    <property type="gene designation" value="cep63"/>
</dbReference>
<dbReference type="eggNOG" id="ENOG502QRYU">
    <property type="taxonomic scope" value="Eukaryota"/>
</dbReference>
<dbReference type="InParanoid" id="Q6PGZ0"/>
<dbReference type="OrthoDB" id="10007333at2759"/>
<dbReference type="PhylomeDB" id="Q6PGZ0"/>
<dbReference type="PRO" id="PR:Q6PGZ0"/>
<dbReference type="Proteomes" id="UP000000437">
    <property type="component" value="Chromosome 6"/>
</dbReference>
<dbReference type="GO" id="GO:0005814">
    <property type="term" value="C:centriole"/>
    <property type="evidence" value="ECO:0000250"/>
    <property type="project" value="UniProtKB"/>
</dbReference>
<dbReference type="GO" id="GO:0005813">
    <property type="term" value="C:centrosome"/>
    <property type="evidence" value="ECO:0000250"/>
    <property type="project" value="UniProtKB"/>
</dbReference>
<dbReference type="GO" id="GO:0005737">
    <property type="term" value="C:cytoplasm"/>
    <property type="evidence" value="ECO:0007669"/>
    <property type="project" value="UniProtKB-KW"/>
</dbReference>
<dbReference type="GO" id="GO:0000922">
    <property type="term" value="C:spindle pole"/>
    <property type="evidence" value="ECO:0000250"/>
    <property type="project" value="UniProtKB"/>
</dbReference>
<dbReference type="GO" id="GO:0051301">
    <property type="term" value="P:cell division"/>
    <property type="evidence" value="ECO:0007669"/>
    <property type="project" value="UniProtKB-KW"/>
</dbReference>
<dbReference type="GO" id="GO:0007099">
    <property type="term" value="P:centriole replication"/>
    <property type="evidence" value="ECO:0000250"/>
    <property type="project" value="UniProtKB"/>
</dbReference>
<dbReference type="GO" id="GO:0098535">
    <property type="term" value="P:de novo centriole assembly involved in multi-ciliated epithelial cell differentiation"/>
    <property type="evidence" value="ECO:0000318"/>
    <property type="project" value="GO_Central"/>
</dbReference>
<dbReference type="GO" id="GO:0000077">
    <property type="term" value="P:DNA damage checkpoint signaling"/>
    <property type="evidence" value="ECO:0000250"/>
    <property type="project" value="UniProtKB"/>
</dbReference>
<dbReference type="GO" id="GO:0042770">
    <property type="term" value="P:signal transduction in response to DNA damage"/>
    <property type="evidence" value="ECO:0000250"/>
    <property type="project" value="UniProtKB"/>
</dbReference>
<dbReference type="GO" id="GO:0051225">
    <property type="term" value="P:spindle assembly"/>
    <property type="evidence" value="ECO:0000250"/>
    <property type="project" value="UniProtKB"/>
</dbReference>
<dbReference type="Gene3D" id="1.10.287.1490">
    <property type="match status" value="1"/>
</dbReference>
<dbReference type="InterPro" id="IPR031470">
    <property type="entry name" value="Cep63/Deup1_N"/>
</dbReference>
<dbReference type="PANTHER" id="PTHR18875:SF3">
    <property type="entry name" value="CENTROSOMAL PROTEIN OF 63 KDA"/>
    <property type="match status" value="1"/>
</dbReference>
<dbReference type="PANTHER" id="PTHR18875">
    <property type="entry name" value="SARCOMA ANTIGEN NY-SAR-24/CYTOSKELETAL PROTEIN SOJO"/>
    <property type="match status" value="1"/>
</dbReference>
<dbReference type="Pfam" id="PF17045">
    <property type="entry name" value="CEP63"/>
    <property type="match status" value="1"/>
</dbReference>
<accession>Q6PGZ0</accession>
<name>CEP63_DANRE</name>
<comment type="function">
    <text evidence="1">Required for normal spindle assembly. Plays a key role in mother-centriole-dependent centriole duplication. Plays a role in DNA damage response. Following DNA damage, such as double-strand breaks (DSBs), is removed from centrosomes; this leads to the inactivation of spindle assembly and delay in mitotic progression.</text>
</comment>
<comment type="subcellular location">
    <subcellularLocation>
        <location evidence="2">Cytoplasm</location>
        <location evidence="2">Cytoskeleton</location>
        <location evidence="2">Microtubule organizing center</location>
        <location evidence="2">Centrosome</location>
        <location evidence="2">Centriole</location>
    </subcellularLocation>
    <subcellularLocation>
        <location evidence="1">Cytoplasm</location>
        <location evidence="1">Cytoskeleton</location>
        <location evidence="1">Microtubule organizing center</location>
        <location evidence="1">Centrosome</location>
    </subcellularLocation>
</comment>
<comment type="alternative products">
    <event type="alternative splicing"/>
    <isoform>
        <id>Q6PGZ0-1</id>
        <name>1</name>
        <sequence type="displayed"/>
    </isoform>
    <isoform>
        <id>Q6PGZ0-2</id>
        <name>2</name>
        <sequence type="described" ref="VSP_037847"/>
    </isoform>
</comment>
<comment type="similarity">
    <text evidence="6">Belongs to the CEP63 family.</text>
</comment>
<comment type="sequence caution" evidence="6">
    <conflict type="frameshift">
        <sequence resource="EMBL" id="EH580184"/>
    </conflict>
</comment>
<sequence length="716" mass="83092">MEEFLSTLRDHDASSVLSSCEPELQELMRQIDIMMGHKRHEWEAEVRAMELSLHNTQEELQSAKALLDKRNSEIRVLGKQLEELHTGKQELVVKYEEQLLHVKEELSKLKRSYEKLQRKHLKESRDGALSREEDRTELSRLNSKIEEFRQRSAEWEQQRLQYQRQVSLLEEQRKTLAEQFSLIQSQGVGRPQEQGQGELQRLRSQLQRAQDSLHAQELELERLRLLQDELGDSIKEQQVSCHAAAHRRGQVLSEEREELKATLDAQDQFVRSTGVQQQQLRREVNRLNQTLQAKEQVIRSLEECLSSPGSAPNLASLRQDLEKVTARLNSSQTCESHLKAEVMRLRDKLESMRKYKAEMSRREHEWKQMEEEHSRCTAENKRLRDELERAEQTRCGEQEGMRKEVFQLTSELHQRDITIATLTGSTSSIERQLRAEVERAERRASELKVTQVQLETLKLENQHLNDLLERVESQSPKRGDGELASLRDSYVSSLKSLEEENRQLRLEMTELRARMEASNQTWQDKYERALLQNQNKNHLYNEQNRADEDVQRRHQEELQAMETQMQERASHYEEQIQTLLTQLENLSRTSPYRPDGQTQESKTSVSPARSSASSASSSSSTRKAQRVATLLSAVANGEEAQASSSDSTGSPNTSVTTRFLEEETLRSQELLQRLDAHIQSMKLENSNTVCKYLGKTGNPQNDVFWQGTHSFCKMID</sequence>
<gene>
    <name type="primary">cep63</name>
    <name type="ORF">zgc:63548</name>
</gene>
<feature type="chain" id="PRO_0000381808" description="Centrosomal protein of 63 kDa">
    <location>
        <begin position="1"/>
        <end position="716"/>
    </location>
</feature>
<feature type="region of interest" description="Disordered" evidence="4">
    <location>
        <begin position="587"/>
        <end position="626"/>
    </location>
</feature>
<feature type="coiled-coil region" evidence="3">
    <location>
        <begin position="38"/>
        <end position="394"/>
    </location>
</feature>
<feature type="coiled-coil region" evidence="3">
    <location>
        <begin position="426"/>
        <end position="590"/>
    </location>
</feature>
<feature type="compositionally biased region" description="Polar residues" evidence="4">
    <location>
        <begin position="587"/>
        <end position="600"/>
    </location>
</feature>
<feature type="compositionally biased region" description="Low complexity" evidence="4">
    <location>
        <begin position="601"/>
        <end position="622"/>
    </location>
</feature>
<feature type="splice variant" id="VSP_037847" description="In isoform 2." evidence="5">
    <location>
        <begin position="1"/>
        <end position="27"/>
    </location>
</feature>
<feature type="sequence conflict" description="In Ref. 2; EH580184." evidence="6" ref="2">
    <original>M</original>
    <variation>V</variation>
    <location>
        <position position="35"/>
    </location>
</feature>
<feature type="sequence conflict" description="In Ref. 2; EH580184." evidence="6" ref="2">
    <original>R</original>
    <variation>Q</variation>
    <location>
        <position position="39"/>
    </location>
</feature>
<feature type="sequence conflict" description="In Ref. 2; EH580184." evidence="6" ref="2">
    <original>T</original>
    <variation>A</variation>
    <location>
        <position position="86"/>
    </location>
</feature>
<feature type="sequence conflict" description="In Ref. 2; EH580184." evidence="6" ref="2">
    <original>Q</original>
    <variation>H</variation>
    <location>
        <position position="192"/>
    </location>
</feature>
<proteinExistence type="evidence at transcript level"/>
<evidence type="ECO:0000250" key="1">
    <source>
        <dbReference type="UniProtKB" id="P0CB05"/>
    </source>
</evidence>
<evidence type="ECO:0000250" key="2">
    <source>
        <dbReference type="UniProtKB" id="Q96MT8"/>
    </source>
</evidence>
<evidence type="ECO:0000255" key="3"/>
<evidence type="ECO:0000256" key="4">
    <source>
        <dbReference type="SAM" id="MobiDB-lite"/>
    </source>
</evidence>
<evidence type="ECO:0000303" key="5">
    <source ref="1"/>
</evidence>
<evidence type="ECO:0000305" key="6"/>
<keyword id="KW-0025">Alternative splicing</keyword>
<keyword id="KW-0131">Cell cycle</keyword>
<keyword id="KW-0132">Cell division</keyword>
<keyword id="KW-0175">Coiled coil</keyword>
<keyword id="KW-0963">Cytoplasm</keyword>
<keyword id="KW-0206">Cytoskeleton</keyword>
<keyword id="KW-0227">DNA damage</keyword>
<keyword id="KW-0498">Mitosis</keyword>
<keyword id="KW-1185">Reference proteome</keyword>
<protein>
    <recommendedName>
        <fullName>Centrosomal protein of 63 kDa</fullName>
        <shortName>Cep63</shortName>
    </recommendedName>
</protein>